<accession>Q8EK65</accession>
<comment type="function">
    <text evidence="1">One of the primary rRNA binding proteins. Required for association of the 30S and 50S subunits to form the 70S ribosome, for tRNA binding and peptide bond formation. It has been suggested to have peptidyltransferase activity; this is somewhat controversial. Makes several contacts with the 16S rRNA in the 70S ribosome.</text>
</comment>
<comment type="subunit">
    <text evidence="1">Part of the 50S ribosomal subunit. Forms a bridge to the 30S subunit in the 70S ribosome.</text>
</comment>
<comment type="similarity">
    <text evidence="1">Belongs to the universal ribosomal protein uL2 family.</text>
</comment>
<proteinExistence type="inferred from homology"/>
<name>RL2_SHEON</name>
<gene>
    <name evidence="1" type="primary">rplB</name>
    <name type="ordered locus">SO_0234</name>
</gene>
<sequence>MAVIKCKPTSPGRRHVVKVVNSDLHKGKPFAGLLAKKSKSGGRNNTGRITVRHVGGGHKQHYRLIDFKRDKDGIPAKIERLEYDPNRTAHIALVLYADGERRYILAAKGMQAGDKIQSGVEAEIKTGNAMPLRNIPVGSVVHAVEMKPGKGAQIARSAGAYVQVVARDGAYATLRLRSGEMRKVPVDCRATFGEVGNAEHMLRQLGKAGAKRWRGIRPTVRGVAMNPVDHPHGGGEGRTSGGRHPVTPWGVPTKGYKTRSNKRTDKYIVRRRNK</sequence>
<keyword id="KW-1185">Reference proteome</keyword>
<keyword id="KW-0687">Ribonucleoprotein</keyword>
<keyword id="KW-0689">Ribosomal protein</keyword>
<keyword id="KW-0694">RNA-binding</keyword>
<keyword id="KW-0699">rRNA-binding</keyword>
<reference key="1">
    <citation type="journal article" date="2002" name="Nat. Biotechnol.">
        <title>Genome sequence of the dissimilatory metal ion-reducing bacterium Shewanella oneidensis.</title>
        <authorList>
            <person name="Heidelberg J.F."/>
            <person name="Paulsen I.T."/>
            <person name="Nelson K.E."/>
            <person name="Gaidos E.J."/>
            <person name="Nelson W.C."/>
            <person name="Read T.D."/>
            <person name="Eisen J.A."/>
            <person name="Seshadri R."/>
            <person name="Ward N.L."/>
            <person name="Methe B.A."/>
            <person name="Clayton R.A."/>
            <person name="Meyer T."/>
            <person name="Tsapin A."/>
            <person name="Scott J."/>
            <person name="Beanan M.J."/>
            <person name="Brinkac L.M."/>
            <person name="Daugherty S.C."/>
            <person name="DeBoy R.T."/>
            <person name="Dodson R.J."/>
            <person name="Durkin A.S."/>
            <person name="Haft D.H."/>
            <person name="Kolonay J.F."/>
            <person name="Madupu R."/>
            <person name="Peterson J.D."/>
            <person name="Umayam L.A."/>
            <person name="White O."/>
            <person name="Wolf A.M."/>
            <person name="Vamathevan J.J."/>
            <person name="Weidman J.F."/>
            <person name="Impraim M."/>
            <person name="Lee K."/>
            <person name="Berry K.J."/>
            <person name="Lee C."/>
            <person name="Mueller J."/>
            <person name="Khouri H.M."/>
            <person name="Gill J."/>
            <person name="Utterback T.R."/>
            <person name="McDonald L.A."/>
            <person name="Feldblyum T.V."/>
            <person name="Smith H.O."/>
            <person name="Venter J.C."/>
            <person name="Nealson K.H."/>
            <person name="Fraser C.M."/>
        </authorList>
    </citation>
    <scope>NUCLEOTIDE SEQUENCE [LARGE SCALE GENOMIC DNA]</scope>
    <source>
        <strain>ATCC 700550 / JCM 31522 / CIP 106686 / LMG 19005 / NCIMB 14063 / MR-1</strain>
    </source>
</reference>
<evidence type="ECO:0000255" key="1">
    <source>
        <dbReference type="HAMAP-Rule" id="MF_01320"/>
    </source>
</evidence>
<evidence type="ECO:0000256" key="2">
    <source>
        <dbReference type="SAM" id="MobiDB-lite"/>
    </source>
</evidence>
<evidence type="ECO:0000305" key="3"/>
<feature type="chain" id="PRO_0000129611" description="Large ribosomal subunit protein uL2">
    <location>
        <begin position="1"/>
        <end position="274"/>
    </location>
</feature>
<feature type="region of interest" description="Disordered" evidence="2">
    <location>
        <begin position="223"/>
        <end position="274"/>
    </location>
</feature>
<organism>
    <name type="scientific">Shewanella oneidensis (strain ATCC 700550 / JCM 31522 / CIP 106686 / LMG 19005 / NCIMB 14063 / MR-1)</name>
    <dbReference type="NCBI Taxonomy" id="211586"/>
    <lineage>
        <taxon>Bacteria</taxon>
        <taxon>Pseudomonadati</taxon>
        <taxon>Pseudomonadota</taxon>
        <taxon>Gammaproteobacteria</taxon>
        <taxon>Alteromonadales</taxon>
        <taxon>Shewanellaceae</taxon>
        <taxon>Shewanella</taxon>
    </lineage>
</organism>
<protein>
    <recommendedName>
        <fullName evidence="1">Large ribosomal subunit protein uL2</fullName>
    </recommendedName>
    <alternativeName>
        <fullName evidence="3">50S ribosomal protein L2</fullName>
    </alternativeName>
</protein>
<dbReference type="EMBL" id="AE014299">
    <property type="protein sequence ID" value="AAN53319.1"/>
    <property type="molecule type" value="Genomic_DNA"/>
</dbReference>
<dbReference type="RefSeq" id="NP_715874.1">
    <property type="nucleotide sequence ID" value="NC_004347.2"/>
</dbReference>
<dbReference type="RefSeq" id="WP_011070620.1">
    <property type="nucleotide sequence ID" value="NZ_CP053946.1"/>
</dbReference>
<dbReference type="SMR" id="Q8EK65"/>
<dbReference type="STRING" id="211586.SO_0234"/>
<dbReference type="PaxDb" id="211586-SO_0234"/>
<dbReference type="KEGG" id="son:SO_0234"/>
<dbReference type="PATRIC" id="fig|211586.12.peg.222"/>
<dbReference type="eggNOG" id="COG0090">
    <property type="taxonomic scope" value="Bacteria"/>
</dbReference>
<dbReference type="HOGENOM" id="CLU_036235_2_1_6"/>
<dbReference type="OrthoDB" id="9778722at2"/>
<dbReference type="PhylomeDB" id="Q8EK65"/>
<dbReference type="BioCyc" id="SONE211586:G1GMP-223-MONOMER"/>
<dbReference type="Proteomes" id="UP000008186">
    <property type="component" value="Chromosome"/>
</dbReference>
<dbReference type="GO" id="GO:0022625">
    <property type="term" value="C:cytosolic large ribosomal subunit"/>
    <property type="evidence" value="ECO:0000318"/>
    <property type="project" value="GO_Central"/>
</dbReference>
<dbReference type="GO" id="GO:0003723">
    <property type="term" value="F:RNA binding"/>
    <property type="evidence" value="ECO:0000318"/>
    <property type="project" value="GO_Central"/>
</dbReference>
<dbReference type="GO" id="GO:0019843">
    <property type="term" value="F:rRNA binding"/>
    <property type="evidence" value="ECO:0007669"/>
    <property type="project" value="UniProtKB-UniRule"/>
</dbReference>
<dbReference type="GO" id="GO:0003735">
    <property type="term" value="F:structural constituent of ribosome"/>
    <property type="evidence" value="ECO:0000318"/>
    <property type="project" value="GO_Central"/>
</dbReference>
<dbReference type="GO" id="GO:0016740">
    <property type="term" value="F:transferase activity"/>
    <property type="evidence" value="ECO:0007669"/>
    <property type="project" value="InterPro"/>
</dbReference>
<dbReference type="GO" id="GO:0002181">
    <property type="term" value="P:cytoplasmic translation"/>
    <property type="evidence" value="ECO:0000318"/>
    <property type="project" value="GO_Central"/>
</dbReference>
<dbReference type="FunFam" id="2.30.30.30:FF:000001">
    <property type="entry name" value="50S ribosomal protein L2"/>
    <property type="match status" value="1"/>
</dbReference>
<dbReference type="FunFam" id="2.40.50.140:FF:000003">
    <property type="entry name" value="50S ribosomal protein L2"/>
    <property type="match status" value="1"/>
</dbReference>
<dbReference type="FunFam" id="4.10.950.10:FF:000001">
    <property type="entry name" value="50S ribosomal protein L2"/>
    <property type="match status" value="1"/>
</dbReference>
<dbReference type="Gene3D" id="2.30.30.30">
    <property type="match status" value="1"/>
</dbReference>
<dbReference type="Gene3D" id="2.40.50.140">
    <property type="entry name" value="Nucleic acid-binding proteins"/>
    <property type="match status" value="1"/>
</dbReference>
<dbReference type="Gene3D" id="4.10.950.10">
    <property type="entry name" value="Ribosomal protein L2, domain 3"/>
    <property type="match status" value="1"/>
</dbReference>
<dbReference type="HAMAP" id="MF_01320_B">
    <property type="entry name" value="Ribosomal_uL2_B"/>
    <property type="match status" value="1"/>
</dbReference>
<dbReference type="InterPro" id="IPR012340">
    <property type="entry name" value="NA-bd_OB-fold"/>
</dbReference>
<dbReference type="InterPro" id="IPR014722">
    <property type="entry name" value="Rib_uL2_dom2"/>
</dbReference>
<dbReference type="InterPro" id="IPR002171">
    <property type="entry name" value="Ribosomal_uL2"/>
</dbReference>
<dbReference type="InterPro" id="IPR005880">
    <property type="entry name" value="Ribosomal_uL2_bac/org-type"/>
</dbReference>
<dbReference type="InterPro" id="IPR022669">
    <property type="entry name" value="Ribosomal_uL2_C"/>
</dbReference>
<dbReference type="InterPro" id="IPR022671">
    <property type="entry name" value="Ribosomal_uL2_CS"/>
</dbReference>
<dbReference type="InterPro" id="IPR014726">
    <property type="entry name" value="Ribosomal_uL2_dom3"/>
</dbReference>
<dbReference type="InterPro" id="IPR022666">
    <property type="entry name" value="Ribosomal_uL2_RNA-bd_dom"/>
</dbReference>
<dbReference type="InterPro" id="IPR008991">
    <property type="entry name" value="Translation_prot_SH3-like_sf"/>
</dbReference>
<dbReference type="NCBIfam" id="TIGR01171">
    <property type="entry name" value="rplB_bact"/>
    <property type="match status" value="1"/>
</dbReference>
<dbReference type="PANTHER" id="PTHR13691:SF5">
    <property type="entry name" value="LARGE RIBOSOMAL SUBUNIT PROTEIN UL2M"/>
    <property type="match status" value="1"/>
</dbReference>
<dbReference type="PANTHER" id="PTHR13691">
    <property type="entry name" value="RIBOSOMAL PROTEIN L2"/>
    <property type="match status" value="1"/>
</dbReference>
<dbReference type="Pfam" id="PF00181">
    <property type="entry name" value="Ribosomal_L2"/>
    <property type="match status" value="1"/>
</dbReference>
<dbReference type="Pfam" id="PF03947">
    <property type="entry name" value="Ribosomal_L2_C"/>
    <property type="match status" value="1"/>
</dbReference>
<dbReference type="PIRSF" id="PIRSF002158">
    <property type="entry name" value="Ribosomal_L2"/>
    <property type="match status" value="1"/>
</dbReference>
<dbReference type="SMART" id="SM01383">
    <property type="entry name" value="Ribosomal_L2"/>
    <property type="match status" value="1"/>
</dbReference>
<dbReference type="SMART" id="SM01382">
    <property type="entry name" value="Ribosomal_L2_C"/>
    <property type="match status" value="1"/>
</dbReference>
<dbReference type="SUPFAM" id="SSF50249">
    <property type="entry name" value="Nucleic acid-binding proteins"/>
    <property type="match status" value="1"/>
</dbReference>
<dbReference type="SUPFAM" id="SSF50104">
    <property type="entry name" value="Translation proteins SH3-like domain"/>
    <property type="match status" value="1"/>
</dbReference>
<dbReference type="PROSITE" id="PS00467">
    <property type="entry name" value="RIBOSOMAL_L2"/>
    <property type="match status" value="1"/>
</dbReference>